<organism>
    <name type="scientific">Synechococcus sp. (strain CC9902)</name>
    <dbReference type="NCBI Taxonomy" id="316279"/>
    <lineage>
        <taxon>Bacteria</taxon>
        <taxon>Bacillati</taxon>
        <taxon>Cyanobacteriota</taxon>
        <taxon>Cyanophyceae</taxon>
        <taxon>Synechococcales</taxon>
        <taxon>Synechococcaceae</taxon>
        <taxon>Synechococcus</taxon>
    </lineage>
</organism>
<reference key="1">
    <citation type="submission" date="2005-08" db="EMBL/GenBank/DDBJ databases">
        <title>Complete sequence of Synechococcus sp. CC9902.</title>
        <authorList>
            <person name="Copeland A."/>
            <person name="Lucas S."/>
            <person name="Lapidus A."/>
            <person name="Barry K."/>
            <person name="Detter J.C."/>
            <person name="Glavina T."/>
            <person name="Hammon N."/>
            <person name="Israni S."/>
            <person name="Pitluck S."/>
            <person name="Martinez M."/>
            <person name="Schmutz J."/>
            <person name="Larimer F."/>
            <person name="Land M."/>
            <person name="Kyrpides N."/>
            <person name="Ivanova N."/>
            <person name="Richardson P."/>
        </authorList>
    </citation>
    <scope>NUCLEOTIDE SEQUENCE [LARGE SCALE GENOMIC DNA]</scope>
    <source>
        <strain>CC9902</strain>
    </source>
</reference>
<name>SYC_SYNS9</name>
<protein>
    <recommendedName>
        <fullName evidence="1">Cysteine--tRNA ligase</fullName>
        <ecNumber evidence="1">6.1.1.16</ecNumber>
    </recommendedName>
    <alternativeName>
        <fullName evidence="1">Cysteinyl-tRNA synthetase</fullName>
        <shortName evidence="1">CysRS</shortName>
    </alternativeName>
</protein>
<gene>
    <name evidence="1" type="primary">cysS</name>
    <name type="ordered locus">Syncc9902_0692</name>
</gene>
<proteinExistence type="inferred from homology"/>
<feature type="chain" id="PRO_0000240965" description="Cysteine--tRNA ligase">
    <location>
        <begin position="1"/>
        <end position="499"/>
    </location>
</feature>
<feature type="short sequence motif" description="'HIGH' region">
    <location>
        <begin position="31"/>
        <end position="41"/>
    </location>
</feature>
<feature type="short sequence motif" description="'KMSKS' region">
    <location>
        <begin position="270"/>
        <end position="274"/>
    </location>
</feature>
<feature type="binding site" evidence="1">
    <location>
        <position position="29"/>
    </location>
    <ligand>
        <name>Zn(2+)</name>
        <dbReference type="ChEBI" id="CHEBI:29105"/>
    </ligand>
</feature>
<feature type="binding site" evidence="1">
    <location>
        <position position="213"/>
    </location>
    <ligand>
        <name>Zn(2+)</name>
        <dbReference type="ChEBI" id="CHEBI:29105"/>
    </ligand>
</feature>
<feature type="binding site" evidence="1">
    <location>
        <position position="238"/>
    </location>
    <ligand>
        <name>Zn(2+)</name>
        <dbReference type="ChEBI" id="CHEBI:29105"/>
    </ligand>
</feature>
<feature type="binding site" evidence="1">
    <location>
        <position position="242"/>
    </location>
    <ligand>
        <name>Zn(2+)</name>
        <dbReference type="ChEBI" id="CHEBI:29105"/>
    </ligand>
</feature>
<feature type="binding site" evidence="1">
    <location>
        <position position="273"/>
    </location>
    <ligand>
        <name>ATP</name>
        <dbReference type="ChEBI" id="CHEBI:30616"/>
    </ligand>
</feature>
<comment type="catalytic activity">
    <reaction evidence="1">
        <text>tRNA(Cys) + L-cysteine + ATP = L-cysteinyl-tRNA(Cys) + AMP + diphosphate</text>
        <dbReference type="Rhea" id="RHEA:17773"/>
        <dbReference type="Rhea" id="RHEA-COMP:9661"/>
        <dbReference type="Rhea" id="RHEA-COMP:9679"/>
        <dbReference type="ChEBI" id="CHEBI:30616"/>
        <dbReference type="ChEBI" id="CHEBI:33019"/>
        <dbReference type="ChEBI" id="CHEBI:35235"/>
        <dbReference type="ChEBI" id="CHEBI:78442"/>
        <dbReference type="ChEBI" id="CHEBI:78517"/>
        <dbReference type="ChEBI" id="CHEBI:456215"/>
        <dbReference type="EC" id="6.1.1.16"/>
    </reaction>
</comment>
<comment type="cofactor">
    <cofactor evidence="1">
        <name>Zn(2+)</name>
        <dbReference type="ChEBI" id="CHEBI:29105"/>
    </cofactor>
    <text evidence="1">Binds 1 zinc ion per subunit.</text>
</comment>
<comment type="subunit">
    <text evidence="1">Monomer.</text>
</comment>
<comment type="subcellular location">
    <subcellularLocation>
        <location evidence="1">Cytoplasm</location>
    </subcellularLocation>
</comment>
<comment type="similarity">
    <text evidence="1">Belongs to the class-I aminoacyl-tRNA synthetase family.</text>
</comment>
<accession>Q3AZ17</accession>
<keyword id="KW-0030">Aminoacyl-tRNA synthetase</keyword>
<keyword id="KW-0067">ATP-binding</keyword>
<keyword id="KW-0963">Cytoplasm</keyword>
<keyword id="KW-0436">Ligase</keyword>
<keyword id="KW-0479">Metal-binding</keyword>
<keyword id="KW-0547">Nucleotide-binding</keyword>
<keyword id="KW-0648">Protein biosynthesis</keyword>
<keyword id="KW-1185">Reference proteome</keyword>
<keyword id="KW-0862">Zinc</keyword>
<dbReference type="EC" id="6.1.1.16" evidence="1"/>
<dbReference type="EMBL" id="CP000097">
    <property type="protein sequence ID" value="ABB25660.1"/>
    <property type="molecule type" value="Genomic_DNA"/>
</dbReference>
<dbReference type="RefSeq" id="WP_011359502.1">
    <property type="nucleotide sequence ID" value="NC_007513.1"/>
</dbReference>
<dbReference type="SMR" id="Q3AZ17"/>
<dbReference type="STRING" id="316279.Syncc9902_0692"/>
<dbReference type="KEGG" id="sye:Syncc9902_0692"/>
<dbReference type="eggNOG" id="COG0215">
    <property type="taxonomic scope" value="Bacteria"/>
</dbReference>
<dbReference type="HOGENOM" id="CLU_013528_0_1_3"/>
<dbReference type="OrthoDB" id="9815130at2"/>
<dbReference type="Proteomes" id="UP000002712">
    <property type="component" value="Chromosome"/>
</dbReference>
<dbReference type="GO" id="GO:0005829">
    <property type="term" value="C:cytosol"/>
    <property type="evidence" value="ECO:0007669"/>
    <property type="project" value="TreeGrafter"/>
</dbReference>
<dbReference type="GO" id="GO:0005524">
    <property type="term" value="F:ATP binding"/>
    <property type="evidence" value="ECO:0007669"/>
    <property type="project" value="UniProtKB-UniRule"/>
</dbReference>
<dbReference type="GO" id="GO:0004817">
    <property type="term" value="F:cysteine-tRNA ligase activity"/>
    <property type="evidence" value="ECO:0007669"/>
    <property type="project" value="UniProtKB-UniRule"/>
</dbReference>
<dbReference type="GO" id="GO:0008270">
    <property type="term" value="F:zinc ion binding"/>
    <property type="evidence" value="ECO:0007669"/>
    <property type="project" value="UniProtKB-UniRule"/>
</dbReference>
<dbReference type="GO" id="GO:0006423">
    <property type="term" value="P:cysteinyl-tRNA aminoacylation"/>
    <property type="evidence" value="ECO:0007669"/>
    <property type="project" value="UniProtKB-UniRule"/>
</dbReference>
<dbReference type="CDD" id="cd00672">
    <property type="entry name" value="CysRS_core"/>
    <property type="match status" value="1"/>
</dbReference>
<dbReference type="Gene3D" id="1.20.120.1910">
    <property type="entry name" value="Cysteine-tRNA ligase, C-terminal anti-codon recognition domain"/>
    <property type="match status" value="1"/>
</dbReference>
<dbReference type="Gene3D" id="3.40.50.620">
    <property type="entry name" value="HUPs"/>
    <property type="match status" value="1"/>
</dbReference>
<dbReference type="HAMAP" id="MF_00041">
    <property type="entry name" value="Cys_tRNA_synth"/>
    <property type="match status" value="1"/>
</dbReference>
<dbReference type="InterPro" id="IPR015803">
    <property type="entry name" value="Cys-tRNA-ligase"/>
</dbReference>
<dbReference type="InterPro" id="IPR015273">
    <property type="entry name" value="Cys-tRNA-synt_Ia_DALR"/>
</dbReference>
<dbReference type="InterPro" id="IPR024909">
    <property type="entry name" value="Cys-tRNA/MSH_ligase"/>
</dbReference>
<dbReference type="InterPro" id="IPR014729">
    <property type="entry name" value="Rossmann-like_a/b/a_fold"/>
</dbReference>
<dbReference type="InterPro" id="IPR032678">
    <property type="entry name" value="tRNA-synt_1_cat_dom"/>
</dbReference>
<dbReference type="InterPro" id="IPR009080">
    <property type="entry name" value="tRNAsynth_Ia_anticodon-bd"/>
</dbReference>
<dbReference type="NCBIfam" id="TIGR00435">
    <property type="entry name" value="cysS"/>
    <property type="match status" value="1"/>
</dbReference>
<dbReference type="PANTHER" id="PTHR10890:SF3">
    <property type="entry name" value="CYSTEINE--TRNA LIGASE, CYTOPLASMIC"/>
    <property type="match status" value="1"/>
</dbReference>
<dbReference type="PANTHER" id="PTHR10890">
    <property type="entry name" value="CYSTEINYL-TRNA SYNTHETASE"/>
    <property type="match status" value="1"/>
</dbReference>
<dbReference type="Pfam" id="PF09190">
    <property type="entry name" value="DALR_2"/>
    <property type="match status" value="1"/>
</dbReference>
<dbReference type="Pfam" id="PF01406">
    <property type="entry name" value="tRNA-synt_1e"/>
    <property type="match status" value="1"/>
</dbReference>
<dbReference type="PRINTS" id="PR00983">
    <property type="entry name" value="TRNASYNTHCYS"/>
</dbReference>
<dbReference type="SMART" id="SM00840">
    <property type="entry name" value="DALR_2"/>
    <property type="match status" value="1"/>
</dbReference>
<dbReference type="SUPFAM" id="SSF47323">
    <property type="entry name" value="Anticodon-binding domain of a subclass of class I aminoacyl-tRNA synthetases"/>
    <property type="match status" value="1"/>
</dbReference>
<dbReference type="SUPFAM" id="SSF52374">
    <property type="entry name" value="Nucleotidylyl transferase"/>
    <property type="match status" value="1"/>
</dbReference>
<evidence type="ECO:0000255" key="1">
    <source>
        <dbReference type="HAMAP-Rule" id="MF_00041"/>
    </source>
</evidence>
<sequence>MTLRLTNTLTRRTEPFTPLRPGKASIYCCGVTVYDLCHLGHARSYINWDVLRRYLIWSGLDVRFVQNFTDIDDKILKRASDENSSMTAVSERNIDAFHADMDSLGILRPDSMPRATQCLDGIRALIGELEAKGAAYSAEGDVYFAVMKHAGYGKLSGRDLSEQQENAGGRVADAEGARKQHPFDFALWKAAKEGEPSFPSPWGAGRPGWHIECSAMVRAELGDTIDIHLGGADLVFPHHENEIAQSEAATGQELAQVWMHNGMVNVGGQKMSKSLGNFTTIRALLESGVSPMTLRLFVLQAHYRKPLDFTAEALEAAATGWKGLNAALGLGERHGQSLEWPATPALAPVALVAPSNHPSEPLEPLQQRFIDAMDDDLNSSGALAVLFDLAKPLRALANRLERGDRADRPADELAALALRWRLLRDLAAVLGLRREADSESSGPGDDSTNQDEIQAAIDARIAAKSAKNYAEADRIRDELKAQGIELIDKPGGITEWIRR</sequence>